<dbReference type="EC" id="4.2.3.4" evidence="1"/>
<dbReference type="EMBL" id="CP000563">
    <property type="protein sequence ID" value="ABN63577.1"/>
    <property type="molecule type" value="Genomic_DNA"/>
</dbReference>
<dbReference type="RefSeq" id="WP_011848131.1">
    <property type="nucleotide sequence ID" value="NC_009052.1"/>
</dbReference>
<dbReference type="SMR" id="A3DA14"/>
<dbReference type="STRING" id="325240.Sbal_4112"/>
<dbReference type="KEGG" id="sbl:Sbal_4112"/>
<dbReference type="HOGENOM" id="CLU_001201_0_2_6"/>
<dbReference type="OrthoDB" id="9806583at2"/>
<dbReference type="UniPathway" id="UPA00053">
    <property type="reaction ID" value="UER00085"/>
</dbReference>
<dbReference type="Proteomes" id="UP000001557">
    <property type="component" value="Chromosome"/>
</dbReference>
<dbReference type="GO" id="GO:0005737">
    <property type="term" value="C:cytoplasm"/>
    <property type="evidence" value="ECO:0007669"/>
    <property type="project" value="UniProtKB-SubCell"/>
</dbReference>
<dbReference type="GO" id="GO:0003856">
    <property type="term" value="F:3-dehydroquinate synthase activity"/>
    <property type="evidence" value="ECO:0007669"/>
    <property type="project" value="UniProtKB-UniRule"/>
</dbReference>
<dbReference type="GO" id="GO:0046872">
    <property type="term" value="F:metal ion binding"/>
    <property type="evidence" value="ECO:0007669"/>
    <property type="project" value="UniProtKB-KW"/>
</dbReference>
<dbReference type="GO" id="GO:0000166">
    <property type="term" value="F:nucleotide binding"/>
    <property type="evidence" value="ECO:0007669"/>
    <property type="project" value="UniProtKB-KW"/>
</dbReference>
<dbReference type="GO" id="GO:0008652">
    <property type="term" value="P:amino acid biosynthetic process"/>
    <property type="evidence" value="ECO:0007669"/>
    <property type="project" value="UniProtKB-KW"/>
</dbReference>
<dbReference type="GO" id="GO:0009073">
    <property type="term" value="P:aromatic amino acid family biosynthetic process"/>
    <property type="evidence" value="ECO:0007669"/>
    <property type="project" value="UniProtKB-KW"/>
</dbReference>
<dbReference type="GO" id="GO:0009423">
    <property type="term" value="P:chorismate biosynthetic process"/>
    <property type="evidence" value="ECO:0007669"/>
    <property type="project" value="UniProtKB-UniRule"/>
</dbReference>
<dbReference type="CDD" id="cd08195">
    <property type="entry name" value="DHQS"/>
    <property type="match status" value="1"/>
</dbReference>
<dbReference type="FunFam" id="1.20.1090.10:FF:000002">
    <property type="entry name" value="3-dehydroquinate synthase"/>
    <property type="match status" value="1"/>
</dbReference>
<dbReference type="FunFam" id="3.40.50.1970:FF:000001">
    <property type="entry name" value="3-dehydroquinate synthase"/>
    <property type="match status" value="1"/>
</dbReference>
<dbReference type="Gene3D" id="3.40.50.1970">
    <property type="match status" value="1"/>
</dbReference>
<dbReference type="Gene3D" id="1.20.1090.10">
    <property type="entry name" value="Dehydroquinate synthase-like - alpha domain"/>
    <property type="match status" value="1"/>
</dbReference>
<dbReference type="HAMAP" id="MF_00110">
    <property type="entry name" value="DHQ_synthase"/>
    <property type="match status" value="1"/>
</dbReference>
<dbReference type="InterPro" id="IPR050071">
    <property type="entry name" value="Dehydroquinate_synthase"/>
</dbReference>
<dbReference type="InterPro" id="IPR016037">
    <property type="entry name" value="DHQ_synth_AroB"/>
</dbReference>
<dbReference type="InterPro" id="IPR030963">
    <property type="entry name" value="DHQ_synth_fam"/>
</dbReference>
<dbReference type="InterPro" id="IPR030960">
    <property type="entry name" value="DHQS/DOIS_N"/>
</dbReference>
<dbReference type="InterPro" id="IPR056179">
    <property type="entry name" value="DHQS_C"/>
</dbReference>
<dbReference type="NCBIfam" id="TIGR01357">
    <property type="entry name" value="aroB"/>
    <property type="match status" value="1"/>
</dbReference>
<dbReference type="PANTHER" id="PTHR43622">
    <property type="entry name" value="3-DEHYDROQUINATE SYNTHASE"/>
    <property type="match status" value="1"/>
</dbReference>
<dbReference type="PANTHER" id="PTHR43622:SF7">
    <property type="entry name" value="3-DEHYDROQUINATE SYNTHASE, CHLOROPLASTIC"/>
    <property type="match status" value="1"/>
</dbReference>
<dbReference type="Pfam" id="PF01761">
    <property type="entry name" value="DHQ_synthase"/>
    <property type="match status" value="1"/>
</dbReference>
<dbReference type="Pfam" id="PF24621">
    <property type="entry name" value="DHQS_C"/>
    <property type="match status" value="1"/>
</dbReference>
<dbReference type="PIRSF" id="PIRSF001455">
    <property type="entry name" value="DHQ_synth"/>
    <property type="match status" value="1"/>
</dbReference>
<dbReference type="SUPFAM" id="SSF56796">
    <property type="entry name" value="Dehydroquinate synthase-like"/>
    <property type="match status" value="1"/>
</dbReference>
<name>AROB_SHEB5</name>
<evidence type="ECO:0000255" key="1">
    <source>
        <dbReference type="HAMAP-Rule" id="MF_00110"/>
    </source>
</evidence>
<sequence length="358" mass="39258">MKQIQVDLGVRSYPIYIGQNLMSDGETLSRYLLKKRILIVTNETVAPLYLKQIQETMASFGEVESVILPDGEQFKDLAHLDTIFTALLQQNYGRDSVLVALGGGVIGDMTGFAAACYQRGIDFIQIPTTLLSQVDSSVGGKTAVNHPLGKNMIGAFYQPQIVLIDTLCLHTLPAREFAAGMAEVIKYGIMWDADFFQWLEDNVTALKTLDAQALVYAISRCCEIKADVVSQDETEQGVRALLNLGHTFGHAIEAEMGYGNWLHGEAVSAGTVLAAQTAKALGLIDESIVCRIIQLLQAFDLPVRAPESMDFDSFIQHMRRDKKVLGGQIRLVLPTAIGRADVFSQVTESTLEQVIRCA</sequence>
<proteinExistence type="inferred from homology"/>
<reference key="1">
    <citation type="submission" date="2007-02" db="EMBL/GenBank/DDBJ databases">
        <title>Complete sequence of chromosome of Shewanella baltica OS155.</title>
        <authorList>
            <consortium name="US DOE Joint Genome Institute"/>
            <person name="Copeland A."/>
            <person name="Lucas S."/>
            <person name="Lapidus A."/>
            <person name="Barry K."/>
            <person name="Detter J.C."/>
            <person name="Glavina del Rio T."/>
            <person name="Hammon N."/>
            <person name="Israni S."/>
            <person name="Dalin E."/>
            <person name="Tice H."/>
            <person name="Pitluck S."/>
            <person name="Sims D.R."/>
            <person name="Brettin T."/>
            <person name="Bruce D."/>
            <person name="Han C."/>
            <person name="Tapia R."/>
            <person name="Brainard J."/>
            <person name="Schmutz J."/>
            <person name="Larimer F."/>
            <person name="Land M."/>
            <person name="Hauser L."/>
            <person name="Kyrpides N."/>
            <person name="Mikhailova N."/>
            <person name="Brettar I."/>
            <person name="Klappenbach J."/>
            <person name="Konstantinidis K."/>
            <person name="Rodrigues J."/>
            <person name="Tiedje J."/>
            <person name="Richardson P."/>
        </authorList>
    </citation>
    <scope>NUCLEOTIDE SEQUENCE [LARGE SCALE GENOMIC DNA]</scope>
    <source>
        <strain>OS155 / ATCC BAA-1091</strain>
    </source>
</reference>
<keyword id="KW-0028">Amino-acid biosynthesis</keyword>
<keyword id="KW-0057">Aromatic amino acid biosynthesis</keyword>
<keyword id="KW-0170">Cobalt</keyword>
<keyword id="KW-0963">Cytoplasm</keyword>
<keyword id="KW-0456">Lyase</keyword>
<keyword id="KW-0479">Metal-binding</keyword>
<keyword id="KW-0520">NAD</keyword>
<keyword id="KW-0547">Nucleotide-binding</keyword>
<keyword id="KW-1185">Reference proteome</keyword>
<keyword id="KW-0862">Zinc</keyword>
<gene>
    <name evidence="1" type="primary">aroB</name>
    <name type="ordered locus">Sbal_4112</name>
</gene>
<feature type="chain" id="PRO_1000094606" description="3-dehydroquinate synthase">
    <location>
        <begin position="1"/>
        <end position="358"/>
    </location>
</feature>
<feature type="binding site" evidence="1">
    <location>
        <begin position="70"/>
        <end position="75"/>
    </location>
    <ligand>
        <name>NAD(+)</name>
        <dbReference type="ChEBI" id="CHEBI:57540"/>
    </ligand>
</feature>
<feature type="binding site" evidence="1">
    <location>
        <begin position="104"/>
        <end position="108"/>
    </location>
    <ligand>
        <name>NAD(+)</name>
        <dbReference type="ChEBI" id="CHEBI:57540"/>
    </ligand>
</feature>
<feature type="binding site" evidence="1">
    <location>
        <begin position="128"/>
        <end position="129"/>
    </location>
    <ligand>
        <name>NAD(+)</name>
        <dbReference type="ChEBI" id="CHEBI:57540"/>
    </ligand>
</feature>
<feature type="binding site" evidence="1">
    <location>
        <position position="141"/>
    </location>
    <ligand>
        <name>NAD(+)</name>
        <dbReference type="ChEBI" id="CHEBI:57540"/>
    </ligand>
</feature>
<feature type="binding site" evidence="1">
    <location>
        <position position="150"/>
    </location>
    <ligand>
        <name>NAD(+)</name>
        <dbReference type="ChEBI" id="CHEBI:57540"/>
    </ligand>
</feature>
<feature type="binding site" evidence="1">
    <location>
        <begin position="168"/>
        <end position="171"/>
    </location>
    <ligand>
        <name>NAD(+)</name>
        <dbReference type="ChEBI" id="CHEBI:57540"/>
    </ligand>
</feature>
<feature type="binding site" evidence="1">
    <location>
        <position position="183"/>
    </location>
    <ligand>
        <name>Zn(2+)</name>
        <dbReference type="ChEBI" id="CHEBI:29105"/>
    </ligand>
</feature>
<feature type="binding site" evidence="1">
    <location>
        <position position="246"/>
    </location>
    <ligand>
        <name>Zn(2+)</name>
        <dbReference type="ChEBI" id="CHEBI:29105"/>
    </ligand>
</feature>
<feature type="binding site" evidence="1">
    <location>
        <position position="263"/>
    </location>
    <ligand>
        <name>Zn(2+)</name>
        <dbReference type="ChEBI" id="CHEBI:29105"/>
    </ligand>
</feature>
<accession>A3DA14</accession>
<comment type="function">
    <text evidence="1">Catalyzes the conversion of 3-deoxy-D-arabino-heptulosonate 7-phosphate (DAHP) to dehydroquinate (DHQ).</text>
</comment>
<comment type="catalytic activity">
    <reaction evidence="1">
        <text>7-phospho-2-dehydro-3-deoxy-D-arabino-heptonate = 3-dehydroquinate + phosphate</text>
        <dbReference type="Rhea" id="RHEA:21968"/>
        <dbReference type="ChEBI" id="CHEBI:32364"/>
        <dbReference type="ChEBI" id="CHEBI:43474"/>
        <dbReference type="ChEBI" id="CHEBI:58394"/>
        <dbReference type="EC" id="4.2.3.4"/>
    </reaction>
</comment>
<comment type="cofactor">
    <cofactor evidence="1">
        <name>Co(2+)</name>
        <dbReference type="ChEBI" id="CHEBI:48828"/>
    </cofactor>
    <cofactor evidence="1">
        <name>Zn(2+)</name>
        <dbReference type="ChEBI" id="CHEBI:29105"/>
    </cofactor>
    <text evidence="1">Binds 1 divalent metal cation per subunit. Can use either Co(2+) or Zn(2+).</text>
</comment>
<comment type="cofactor">
    <cofactor evidence="1">
        <name>NAD(+)</name>
        <dbReference type="ChEBI" id="CHEBI:57540"/>
    </cofactor>
</comment>
<comment type="pathway">
    <text evidence="1">Metabolic intermediate biosynthesis; chorismate biosynthesis; chorismate from D-erythrose 4-phosphate and phosphoenolpyruvate: step 2/7.</text>
</comment>
<comment type="subcellular location">
    <subcellularLocation>
        <location evidence="1">Cytoplasm</location>
    </subcellularLocation>
</comment>
<comment type="similarity">
    <text evidence="1">Belongs to the sugar phosphate cyclases superfamily. Dehydroquinate synthase family.</text>
</comment>
<organism>
    <name type="scientific">Shewanella baltica (strain OS155 / ATCC BAA-1091)</name>
    <dbReference type="NCBI Taxonomy" id="325240"/>
    <lineage>
        <taxon>Bacteria</taxon>
        <taxon>Pseudomonadati</taxon>
        <taxon>Pseudomonadota</taxon>
        <taxon>Gammaproteobacteria</taxon>
        <taxon>Alteromonadales</taxon>
        <taxon>Shewanellaceae</taxon>
        <taxon>Shewanella</taxon>
    </lineage>
</organism>
<protein>
    <recommendedName>
        <fullName evidence="1">3-dehydroquinate synthase</fullName>
        <shortName evidence="1">DHQS</shortName>
        <ecNumber evidence="1">4.2.3.4</ecNumber>
    </recommendedName>
</protein>